<organism>
    <name type="scientific">Protochlamydia amoebophila (strain UWE25)</name>
    <dbReference type="NCBI Taxonomy" id="264201"/>
    <lineage>
        <taxon>Bacteria</taxon>
        <taxon>Pseudomonadati</taxon>
        <taxon>Chlamydiota</taxon>
        <taxon>Chlamydiia</taxon>
        <taxon>Parachlamydiales</taxon>
        <taxon>Parachlamydiaceae</taxon>
        <taxon>Candidatus Protochlamydia</taxon>
    </lineage>
</organism>
<reference key="1">
    <citation type="journal article" date="2004" name="Science">
        <title>Illuminating the evolutionary history of chlamydiae.</title>
        <authorList>
            <person name="Horn M."/>
            <person name="Collingro A."/>
            <person name="Schmitz-Esser S."/>
            <person name="Beier C.L."/>
            <person name="Purkhold U."/>
            <person name="Fartmann B."/>
            <person name="Brandt P."/>
            <person name="Nyakatura G.J."/>
            <person name="Droege M."/>
            <person name="Frishman D."/>
            <person name="Rattei T."/>
            <person name="Mewes H.-W."/>
            <person name="Wagner M."/>
        </authorList>
    </citation>
    <scope>NUCLEOTIDE SEQUENCE [LARGE SCALE GENOMIC DNA]</scope>
    <source>
        <strain>UWE25</strain>
    </source>
</reference>
<sequence>MSKRFMITAGGTGGHIFPAQGLAQELIKKTYSSSILFVAGGLSTNKYFDRSIFPFQEVSASPLFSKNPFKLLKGVFNLLRGVWQSIRIIRKFKPDVVVGFGSYYTVPPLLAAKILRIPIVLHEANSIPGKANKWLASMAWRVGIHFPFTATLLKGNTIEVGMPLREGYQLDQIDKIEALSYFGLSKNNSTLLVFGGSQGALAINRLMRNLANTWKNTPIQIIHITGSIQEADELKIFYANYQVKASVKAFEKNMHLAWRAAEVFISRSGASTIAEAMEFEVPGILIPYPHATDHHQDKNADFFVDIVKGGIKIVEEKAKPEIVLKSIQLLIDPIALDKRKSAIHSYKCRPDRTTLCELVLDTSELKSLHKAPQKRK</sequence>
<protein>
    <recommendedName>
        <fullName evidence="1">UDP-N-acetylglucosamine--N-acetylmuramyl-(pentapeptide) pyrophosphoryl-undecaprenol N-acetylglucosamine transferase</fullName>
        <ecNumber evidence="1">2.4.1.227</ecNumber>
    </recommendedName>
    <alternativeName>
        <fullName evidence="1">Undecaprenyl-PP-MurNAc-pentapeptide-UDPGlcNAc GlcNAc transferase</fullName>
    </alternativeName>
</protein>
<evidence type="ECO:0000255" key="1">
    <source>
        <dbReference type="HAMAP-Rule" id="MF_00033"/>
    </source>
</evidence>
<feature type="chain" id="PRO_0000225073" description="UDP-N-acetylglucosamine--N-acetylmuramyl-(pentapeptide) pyrophosphoryl-undecaprenol N-acetylglucosamine transferase">
    <location>
        <begin position="1"/>
        <end position="376"/>
    </location>
</feature>
<feature type="binding site" evidence="1">
    <location>
        <begin position="12"/>
        <end position="14"/>
    </location>
    <ligand>
        <name>UDP-N-acetyl-alpha-D-glucosamine</name>
        <dbReference type="ChEBI" id="CHEBI:57705"/>
    </ligand>
</feature>
<feature type="binding site" evidence="1">
    <location>
        <position position="125"/>
    </location>
    <ligand>
        <name>UDP-N-acetyl-alpha-D-glucosamine</name>
        <dbReference type="ChEBI" id="CHEBI:57705"/>
    </ligand>
</feature>
<feature type="binding site" evidence="1">
    <location>
        <position position="165"/>
    </location>
    <ligand>
        <name>UDP-N-acetyl-alpha-D-glucosamine</name>
        <dbReference type="ChEBI" id="CHEBI:57705"/>
    </ligand>
</feature>
<feature type="binding site" evidence="1">
    <location>
        <position position="197"/>
    </location>
    <ligand>
        <name>UDP-N-acetyl-alpha-D-glucosamine</name>
        <dbReference type="ChEBI" id="CHEBI:57705"/>
    </ligand>
</feature>
<feature type="binding site" evidence="1">
    <location>
        <position position="296"/>
    </location>
    <ligand>
        <name>UDP-N-acetyl-alpha-D-glucosamine</name>
        <dbReference type="ChEBI" id="CHEBI:57705"/>
    </ligand>
</feature>
<comment type="function">
    <text evidence="1">Cell wall formation. Catalyzes the transfer of a GlcNAc subunit on undecaprenyl-pyrophosphoryl-MurNAc-pentapeptide (lipid intermediate I) to form undecaprenyl-pyrophosphoryl-MurNAc-(pentapeptide)GlcNAc (lipid intermediate II).</text>
</comment>
<comment type="catalytic activity">
    <reaction evidence="1">
        <text>di-trans,octa-cis-undecaprenyl diphospho-N-acetyl-alpha-D-muramoyl-L-alanyl-D-glutamyl-meso-2,6-diaminopimeloyl-D-alanyl-D-alanine + UDP-N-acetyl-alpha-D-glucosamine = di-trans,octa-cis-undecaprenyl diphospho-[N-acetyl-alpha-D-glucosaminyl-(1-&gt;4)]-N-acetyl-alpha-D-muramoyl-L-alanyl-D-glutamyl-meso-2,6-diaminopimeloyl-D-alanyl-D-alanine + UDP + H(+)</text>
        <dbReference type="Rhea" id="RHEA:31227"/>
        <dbReference type="ChEBI" id="CHEBI:15378"/>
        <dbReference type="ChEBI" id="CHEBI:57705"/>
        <dbReference type="ChEBI" id="CHEBI:58223"/>
        <dbReference type="ChEBI" id="CHEBI:61387"/>
        <dbReference type="ChEBI" id="CHEBI:61388"/>
        <dbReference type="EC" id="2.4.1.227"/>
    </reaction>
</comment>
<comment type="pathway">
    <text evidence="1">Cell wall biogenesis; peptidoglycan biosynthesis.</text>
</comment>
<comment type="subcellular location">
    <subcellularLocation>
        <location evidence="1">Cell inner membrane</location>
        <topology evidence="1">Peripheral membrane protein</topology>
        <orientation evidence="1">Cytoplasmic side</orientation>
    </subcellularLocation>
</comment>
<comment type="similarity">
    <text evidence="1">Belongs to the glycosyltransferase 28 family. MurG subfamily.</text>
</comment>
<proteinExistence type="inferred from homology"/>
<name>MURG_PARUW</name>
<gene>
    <name evidence="1" type="primary">murG</name>
    <name type="ordered locus">pc1248</name>
</gene>
<dbReference type="EC" id="2.4.1.227" evidence="1"/>
<dbReference type="EMBL" id="BX908798">
    <property type="protein sequence ID" value="CAF23972.1"/>
    <property type="molecule type" value="Genomic_DNA"/>
</dbReference>
<dbReference type="RefSeq" id="WP_011175798.1">
    <property type="nucleotide sequence ID" value="NC_005861.2"/>
</dbReference>
<dbReference type="SMR" id="Q6MBS7"/>
<dbReference type="STRING" id="264201.pc1248"/>
<dbReference type="CAZy" id="GT28">
    <property type="family name" value="Glycosyltransferase Family 28"/>
</dbReference>
<dbReference type="KEGG" id="pcu:PC_RS06015"/>
<dbReference type="eggNOG" id="COG0707">
    <property type="taxonomic scope" value="Bacteria"/>
</dbReference>
<dbReference type="HOGENOM" id="CLU_037404_0_1_0"/>
<dbReference type="OrthoDB" id="9808936at2"/>
<dbReference type="UniPathway" id="UPA00219"/>
<dbReference type="Proteomes" id="UP000000529">
    <property type="component" value="Chromosome"/>
</dbReference>
<dbReference type="GO" id="GO:0005886">
    <property type="term" value="C:plasma membrane"/>
    <property type="evidence" value="ECO:0007669"/>
    <property type="project" value="UniProtKB-SubCell"/>
</dbReference>
<dbReference type="GO" id="GO:0051991">
    <property type="term" value="F:UDP-N-acetyl-D-glucosamine:N-acetylmuramoyl-L-alanyl-D-glutamyl-meso-2,6-diaminopimelyl-D-alanyl-D-alanine-diphosphoundecaprenol 4-beta-N-acetylglucosaminlytransferase activity"/>
    <property type="evidence" value="ECO:0007669"/>
    <property type="project" value="RHEA"/>
</dbReference>
<dbReference type="GO" id="GO:0050511">
    <property type="term" value="F:undecaprenyldiphospho-muramoylpentapeptide beta-N-acetylglucosaminyltransferase activity"/>
    <property type="evidence" value="ECO:0007669"/>
    <property type="project" value="UniProtKB-UniRule"/>
</dbReference>
<dbReference type="GO" id="GO:0005975">
    <property type="term" value="P:carbohydrate metabolic process"/>
    <property type="evidence" value="ECO:0007669"/>
    <property type="project" value="InterPro"/>
</dbReference>
<dbReference type="GO" id="GO:0051301">
    <property type="term" value="P:cell division"/>
    <property type="evidence" value="ECO:0007669"/>
    <property type="project" value="UniProtKB-KW"/>
</dbReference>
<dbReference type="GO" id="GO:0071555">
    <property type="term" value="P:cell wall organization"/>
    <property type="evidence" value="ECO:0007669"/>
    <property type="project" value="UniProtKB-KW"/>
</dbReference>
<dbReference type="GO" id="GO:0030259">
    <property type="term" value="P:lipid glycosylation"/>
    <property type="evidence" value="ECO:0007669"/>
    <property type="project" value="UniProtKB-UniRule"/>
</dbReference>
<dbReference type="GO" id="GO:0009252">
    <property type="term" value="P:peptidoglycan biosynthetic process"/>
    <property type="evidence" value="ECO:0007669"/>
    <property type="project" value="UniProtKB-UniRule"/>
</dbReference>
<dbReference type="GO" id="GO:0008360">
    <property type="term" value="P:regulation of cell shape"/>
    <property type="evidence" value="ECO:0007669"/>
    <property type="project" value="UniProtKB-KW"/>
</dbReference>
<dbReference type="CDD" id="cd03785">
    <property type="entry name" value="GT28_MurG"/>
    <property type="match status" value="1"/>
</dbReference>
<dbReference type="Gene3D" id="3.40.50.2000">
    <property type="entry name" value="Glycogen Phosphorylase B"/>
    <property type="match status" value="2"/>
</dbReference>
<dbReference type="HAMAP" id="MF_00033">
    <property type="entry name" value="MurG"/>
    <property type="match status" value="1"/>
</dbReference>
<dbReference type="InterPro" id="IPR006009">
    <property type="entry name" value="GlcNAc_MurG"/>
</dbReference>
<dbReference type="InterPro" id="IPR007235">
    <property type="entry name" value="Glyco_trans_28_C"/>
</dbReference>
<dbReference type="InterPro" id="IPR004276">
    <property type="entry name" value="GlycoTrans_28_N"/>
</dbReference>
<dbReference type="NCBIfam" id="TIGR01133">
    <property type="entry name" value="murG"/>
    <property type="match status" value="1"/>
</dbReference>
<dbReference type="PANTHER" id="PTHR21015:SF22">
    <property type="entry name" value="GLYCOSYLTRANSFERASE"/>
    <property type="match status" value="1"/>
</dbReference>
<dbReference type="PANTHER" id="PTHR21015">
    <property type="entry name" value="UDP-N-ACETYLGLUCOSAMINE--N-ACETYLMURAMYL-(PENTAPEPTIDE) PYROPHOSPHORYL-UNDECAPRENOL N-ACETYLGLUCOSAMINE TRANSFERASE 1"/>
    <property type="match status" value="1"/>
</dbReference>
<dbReference type="Pfam" id="PF04101">
    <property type="entry name" value="Glyco_tran_28_C"/>
    <property type="match status" value="1"/>
</dbReference>
<dbReference type="Pfam" id="PF03033">
    <property type="entry name" value="Glyco_transf_28"/>
    <property type="match status" value="1"/>
</dbReference>
<dbReference type="SUPFAM" id="SSF53756">
    <property type="entry name" value="UDP-Glycosyltransferase/glycogen phosphorylase"/>
    <property type="match status" value="1"/>
</dbReference>
<keyword id="KW-0131">Cell cycle</keyword>
<keyword id="KW-0132">Cell division</keyword>
<keyword id="KW-0997">Cell inner membrane</keyword>
<keyword id="KW-1003">Cell membrane</keyword>
<keyword id="KW-0133">Cell shape</keyword>
<keyword id="KW-0961">Cell wall biogenesis/degradation</keyword>
<keyword id="KW-0328">Glycosyltransferase</keyword>
<keyword id="KW-0472">Membrane</keyword>
<keyword id="KW-0573">Peptidoglycan synthesis</keyword>
<keyword id="KW-1185">Reference proteome</keyword>
<keyword id="KW-0808">Transferase</keyword>
<accession>Q6MBS7</accession>